<proteinExistence type="evidence at protein level"/>
<organism>
    <name type="scientific">Spinacia oleracea</name>
    <name type="common">Spinach</name>
    <dbReference type="NCBI Taxonomy" id="3562"/>
    <lineage>
        <taxon>Eukaryota</taxon>
        <taxon>Viridiplantae</taxon>
        <taxon>Streptophyta</taxon>
        <taxon>Embryophyta</taxon>
        <taxon>Tracheophyta</taxon>
        <taxon>Spermatophyta</taxon>
        <taxon>Magnoliopsida</taxon>
        <taxon>eudicotyledons</taxon>
        <taxon>Gunneridae</taxon>
        <taxon>Pentapetalae</taxon>
        <taxon>Caryophyllales</taxon>
        <taxon>Chenopodiaceae</taxon>
        <taxon>Chenopodioideae</taxon>
        <taxon>Anserineae</taxon>
        <taxon>Spinacia</taxon>
    </lineage>
</organism>
<accession>Q9XH32</accession>
<evidence type="ECO:0000250" key="1"/>
<evidence type="ECO:0000255" key="2"/>
<evidence type="ECO:0000305" key="3"/>
<evidence type="ECO:0007829" key="4">
    <source>
        <dbReference type="PDB" id="1C2Y"/>
    </source>
</evidence>
<protein>
    <recommendedName>
        <fullName>6,7-dimethyl-8-ribityllumazine synthase, chloroplastic</fullName>
        <shortName>DMRL synthase</shortName>
        <shortName>LS</shortName>
        <shortName>Lumazine synthase</shortName>
        <ecNumber>2.5.1.78</ecNumber>
    </recommendedName>
</protein>
<dbReference type="EC" id="2.5.1.78"/>
<dbReference type="EMBL" id="AF147203">
    <property type="protein sequence ID" value="AAD44808.1"/>
    <property type="molecule type" value="mRNA"/>
</dbReference>
<dbReference type="RefSeq" id="NP_001413367.1">
    <property type="nucleotide sequence ID" value="NM_001426438.1"/>
</dbReference>
<dbReference type="PDB" id="1C2Y">
    <property type="method" value="X-ray"/>
    <property type="resolution" value="3.30 A"/>
    <property type="chains" value="A/B/C/D/E/F/G/H/I/J/K/L/M/N/O/P/Q/R/S/T=67-222"/>
</dbReference>
<dbReference type="PDBsum" id="1C2Y"/>
<dbReference type="SMR" id="Q9XH32"/>
<dbReference type="GeneID" id="110794951"/>
<dbReference type="KEGG" id="ag:AAD44808"/>
<dbReference type="OrthoDB" id="2965at2759"/>
<dbReference type="UniPathway" id="UPA00275">
    <property type="reaction ID" value="UER00404"/>
</dbReference>
<dbReference type="EvolutionaryTrace" id="Q9XH32"/>
<dbReference type="Proteomes" id="UP001155700">
    <property type="component" value="Unplaced"/>
</dbReference>
<dbReference type="GO" id="GO:0009507">
    <property type="term" value="C:chloroplast"/>
    <property type="evidence" value="ECO:0007669"/>
    <property type="project" value="UniProtKB-SubCell"/>
</dbReference>
<dbReference type="GO" id="GO:0005737">
    <property type="term" value="C:cytoplasm"/>
    <property type="evidence" value="ECO:0000318"/>
    <property type="project" value="GO_Central"/>
</dbReference>
<dbReference type="GO" id="GO:0009349">
    <property type="term" value="C:riboflavin synthase complex"/>
    <property type="evidence" value="ECO:0007669"/>
    <property type="project" value="InterPro"/>
</dbReference>
<dbReference type="GO" id="GO:0000906">
    <property type="term" value="F:6,7-dimethyl-8-ribityllumazine synthase activity"/>
    <property type="evidence" value="ECO:0000318"/>
    <property type="project" value="GO_Central"/>
</dbReference>
<dbReference type="GO" id="GO:0009231">
    <property type="term" value="P:riboflavin biosynthetic process"/>
    <property type="evidence" value="ECO:0000318"/>
    <property type="project" value="GO_Central"/>
</dbReference>
<dbReference type="CDD" id="cd09209">
    <property type="entry name" value="Lumazine_synthase-I"/>
    <property type="match status" value="1"/>
</dbReference>
<dbReference type="FunFam" id="3.40.50.960:FF:000001">
    <property type="entry name" value="6,7-dimethyl-8-ribityllumazine synthase"/>
    <property type="match status" value="1"/>
</dbReference>
<dbReference type="Gene3D" id="3.40.50.960">
    <property type="entry name" value="Lumazine/riboflavin synthase"/>
    <property type="match status" value="1"/>
</dbReference>
<dbReference type="HAMAP" id="MF_00178">
    <property type="entry name" value="Lumazine_synth"/>
    <property type="match status" value="1"/>
</dbReference>
<dbReference type="InterPro" id="IPR017420">
    <property type="entry name" value="DMRL_synthase_chloroplast"/>
</dbReference>
<dbReference type="InterPro" id="IPR034964">
    <property type="entry name" value="LS"/>
</dbReference>
<dbReference type="InterPro" id="IPR002180">
    <property type="entry name" value="LS/RS"/>
</dbReference>
<dbReference type="InterPro" id="IPR036467">
    <property type="entry name" value="LS/RS_sf"/>
</dbReference>
<dbReference type="NCBIfam" id="TIGR00114">
    <property type="entry name" value="lumazine-synth"/>
    <property type="match status" value="1"/>
</dbReference>
<dbReference type="PANTHER" id="PTHR21058:SF0">
    <property type="entry name" value="6,7-DIMETHYL-8-RIBITYLLUMAZINE SYNTHASE"/>
    <property type="match status" value="1"/>
</dbReference>
<dbReference type="PANTHER" id="PTHR21058">
    <property type="entry name" value="6,7-DIMETHYL-8-RIBITYLLUMAZINE SYNTHASE DMRL SYNTHASE LUMAZINE SYNTHASE"/>
    <property type="match status" value="1"/>
</dbReference>
<dbReference type="Pfam" id="PF00885">
    <property type="entry name" value="DMRL_synthase"/>
    <property type="match status" value="1"/>
</dbReference>
<dbReference type="PIRSF" id="PIRSF038166">
    <property type="entry name" value="DMRL_synthase_cp"/>
    <property type="match status" value="1"/>
</dbReference>
<dbReference type="SUPFAM" id="SSF52121">
    <property type="entry name" value="Lumazine synthase"/>
    <property type="match status" value="1"/>
</dbReference>
<name>RISB_SPIOL</name>
<sequence>MASFAASQTCFLTTNPTCLKPNSPQKSSTFLPFSAPLSSSSSFPGCGLVHVASNKKNRASFVVTNAVRELEGYVTKAQSFRFAIVVARFNEFVTRRLMEGALDTFKKYSVNEDIDVVWVPGAYELGVTAQALGKSGKYHAIVCLGAVVKGDTSHYDAVVNSASSGVLSAGLNSGVPCVFGVLTCDNMDQAINRAGGKAGNKGAESALTAIEMASLFEHHLKA</sequence>
<keyword id="KW-0002">3D-structure</keyword>
<keyword id="KW-0150">Chloroplast</keyword>
<keyword id="KW-0934">Plastid</keyword>
<keyword id="KW-1185">Reference proteome</keyword>
<keyword id="KW-0686">Riboflavin biosynthesis</keyword>
<keyword id="KW-0808">Transferase</keyword>
<keyword id="KW-0809">Transit peptide</keyword>
<comment type="function">
    <text>Catalyzes the formation of 6,7-dimethyl-8-ribityllumazine by condensation of 5-amino-6-(D-ribitylamino)uracil with 3,4-dihydroxy-2-butanone 4-phosphate. This is the penultimate step in the biosynthesis of riboflavin.</text>
</comment>
<comment type="catalytic activity">
    <reaction>
        <text>(2S)-2-hydroxy-3-oxobutyl phosphate + 5-amino-6-(D-ribitylamino)uracil = 6,7-dimethyl-8-(1-D-ribityl)lumazine + phosphate + 2 H2O + H(+)</text>
        <dbReference type="Rhea" id="RHEA:26152"/>
        <dbReference type="ChEBI" id="CHEBI:15377"/>
        <dbReference type="ChEBI" id="CHEBI:15378"/>
        <dbReference type="ChEBI" id="CHEBI:15934"/>
        <dbReference type="ChEBI" id="CHEBI:43474"/>
        <dbReference type="ChEBI" id="CHEBI:58201"/>
        <dbReference type="ChEBI" id="CHEBI:58830"/>
        <dbReference type="EC" id="2.5.1.78"/>
    </reaction>
</comment>
<comment type="pathway">
    <text>Cofactor biosynthesis; riboflavin biosynthesis; riboflavin from 2-hydroxy-3-oxobutyl phosphate and 5-amino-6-(D-ribitylamino)uracil: step 1/2.</text>
</comment>
<comment type="subunit">
    <text evidence="3">Oligomer forming an icosahedral capsid.</text>
</comment>
<comment type="subcellular location">
    <subcellularLocation>
        <location>Plastid</location>
        <location>Chloroplast</location>
    </subcellularLocation>
</comment>
<comment type="similarity">
    <text evidence="3">Belongs to the DMRL synthase family.</text>
</comment>
<feature type="transit peptide" description="Chloroplast" evidence="2">
    <location>
        <begin position="1"/>
        <end position="66"/>
    </location>
</feature>
<feature type="chain" id="PRO_0000030439" description="6,7-dimethyl-8-ribityllumazine synthase, chloroplastic">
    <location>
        <begin position="67"/>
        <end position="222"/>
    </location>
</feature>
<feature type="active site" description="Proton donor" evidence="2">
    <location>
        <position position="154"/>
    </location>
</feature>
<feature type="binding site" evidence="1">
    <location>
        <position position="89"/>
    </location>
    <ligand>
        <name>5-amino-6-(D-ribitylamino)uracil</name>
        <dbReference type="ChEBI" id="CHEBI:15934"/>
    </ligand>
</feature>
<feature type="binding site" evidence="1">
    <location>
        <begin position="122"/>
        <end position="124"/>
    </location>
    <ligand>
        <name>5-amino-6-(D-ribitylamino)uracil</name>
        <dbReference type="ChEBI" id="CHEBI:15934"/>
    </ligand>
</feature>
<feature type="binding site" evidence="1">
    <location>
        <begin position="146"/>
        <end position="148"/>
    </location>
    <ligand>
        <name>5-amino-6-(D-ribitylamino)uracil</name>
        <dbReference type="ChEBI" id="CHEBI:15934"/>
    </ligand>
</feature>
<feature type="binding site" evidence="1">
    <location>
        <begin position="151"/>
        <end position="152"/>
    </location>
    <ligand>
        <name>(2S)-2-hydroxy-3-oxobutyl phosphate</name>
        <dbReference type="ChEBI" id="CHEBI:58830"/>
    </ligand>
</feature>
<feature type="binding site" evidence="1">
    <location>
        <position position="179"/>
    </location>
    <ligand>
        <name>5-amino-6-(D-ribitylamino)uracil</name>
        <dbReference type="ChEBI" id="CHEBI:15934"/>
    </ligand>
</feature>
<feature type="binding site" evidence="1">
    <location>
        <position position="193"/>
    </location>
    <ligand>
        <name>(2S)-2-hydroxy-3-oxobutyl phosphate</name>
        <dbReference type="ChEBI" id="CHEBI:58830"/>
    </ligand>
</feature>
<feature type="strand" evidence="4">
    <location>
        <begin position="68"/>
        <end position="70"/>
    </location>
</feature>
<feature type="strand" evidence="4">
    <location>
        <begin position="74"/>
        <end position="76"/>
    </location>
</feature>
<feature type="strand" evidence="4">
    <location>
        <begin position="82"/>
        <end position="88"/>
    </location>
</feature>
<feature type="helix" evidence="4">
    <location>
        <begin position="91"/>
        <end position="107"/>
    </location>
</feature>
<feature type="strand" evidence="4">
    <location>
        <begin position="115"/>
        <end position="121"/>
    </location>
</feature>
<feature type="helix" evidence="4">
    <location>
        <begin position="122"/>
        <end position="134"/>
    </location>
</feature>
<feature type="strand" evidence="4">
    <location>
        <begin position="139"/>
        <end position="146"/>
    </location>
</feature>
<feature type="helix" evidence="4">
    <location>
        <begin position="154"/>
        <end position="173"/>
    </location>
</feature>
<feature type="strand" evidence="4">
    <location>
        <begin position="177"/>
        <end position="182"/>
    </location>
</feature>
<feature type="helix" evidence="4">
    <location>
        <begin position="187"/>
        <end position="193"/>
    </location>
</feature>
<feature type="strand" evidence="4">
    <location>
        <begin position="194"/>
        <end position="196"/>
    </location>
</feature>
<feature type="helix" evidence="4">
    <location>
        <begin position="201"/>
        <end position="219"/>
    </location>
</feature>
<reference key="1">
    <citation type="journal article" date="1999" name="J. Biol. Chem.">
        <title>Plant riboflavin biosynthesis. Cloning, chloroplast localization, expression, purification, and partial characterization of spinach lumazine synthase.</title>
        <authorList>
            <person name="Jordan D.B."/>
            <person name="Bacot K.O."/>
            <person name="Carlson T.J."/>
            <person name="Kessel M."/>
            <person name="Viitanen P.V."/>
        </authorList>
    </citation>
    <scope>NUCLEOTIDE SEQUENCE [MRNA]</scope>
    <scope>CHARACTERIZATION</scope>
    <source>
        <strain>cv. Melody</strain>
    </source>
</reference>